<evidence type="ECO:0000255" key="1">
    <source>
        <dbReference type="HAMAP-Rule" id="MF_01082"/>
    </source>
</evidence>
<sequence length="349" mass="39333">MTEFDNLTWLHGKPQGSGLLKANPEDFVVVEDLGFTPDGEGEHILLRILKNGCNTRFVADALAKFLKIHAREVSFAGQKDKHAVTEQWLCARVPGKEMPDFSAFQLEGCKVLEYARHKRKLRLGALKGNAFTLVLREISDRRDVETRLQAIRDGGVPNYFGAQRFGIGGSNLQGALRWAQSNAPVRDRNKRSFWLSAARSALFNQIVHQRLKKPDFNQVVDGDALQLAGRGSWFVATSEELPELQRRVDEKELMITASLPGSGEWGTQRAALAFEQDAIAQETVLQSLLLREKVEASRRAMLLYPQQLSWNWWDDVTVELRFWLPAGSFATSVVRELINTMGDYAHIAE</sequence>
<dbReference type="EC" id="5.4.99.27" evidence="1"/>
<dbReference type="EMBL" id="CP001127">
    <property type="protein sequence ID" value="ACF90284.1"/>
    <property type="molecule type" value="Genomic_DNA"/>
</dbReference>
<dbReference type="RefSeq" id="WP_000134246.1">
    <property type="nucleotide sequence ID" value="NC_011094.1"/>
</dbReference>
<dbReference type="SMR" id="B4TTV9"/>
<dbReference type="KEGG" id="sew:SeSA_A3079"/>
<dbReference type="HOGENOM" id="CLU_005281_4_0_6"/>
<dbReference type="Proteomes" id="UP000001865">
    <property type="component" value="Chromosome"/>
</dbReference>
<dbReference type="GO" id="GO:0005829">
    <property type="term" value="C:cytosol"/>
    <property type="evidence" value="ECO:0007669"/>
    <property type="project" value="TreeGrafter"/>
</dbReference>
<dbReference type="GO" id="GO:0003723">
    <property type="term" value="F:RNA binding"/>
    <property type="evidence" value="ECO:0007669"/>
    <property type="project" value="InterPro"/>
</dbReference>
<dbReference type="GO" id="GO:0160150">
    <property type="term" value="F:tRNA pseudouridine(13) synthase activity"/>
    <property type="evidence" value="ECO:0007669"/>
    <property type="project" value="UniProtKB-EC"/>
</dbReference>
<dbReference type="GO" id="GO:0031119">
    <property type="term" value="P:tRNA pseudouridine synthesis"/>
    <property type="evidence" value="ECO:0007669"/>
    <property type="project" value="UniProtKB-UniRule"/>
</dbReference>
<dbReference type="CDD" id="cd02575">
    <property type="entry name" value="PseudoU_synth_EcTruD"/>
    <property type="match status" value="1"/>
</dbReference>
<dbReference type="FunFam" id="3.30.2340.10:FF:000001">
    <property type="entry name" value="tRNA pseudouridine synthase D"/>
    <property type="match status" value="1"/>
</dbReference>
<dbReference type="FunFam" id="3.30.2350.20:FF:000001">
    <property type="entry name" value="tRNA pseudouridine synthase D"/>
    <property type="match status" value="1"/>
</dbReference>
<dbReference type="Gene3D" id="3.30.2350.20">
    <property type="entry name" value="TruD, catalytic domain"/>
    <property type="match status" value="1"/>
</dbReference>
<dbReference type="Gene3D" id="3.30.2340.10">
    <property type="entry name" value="TruD, insertion domain"/>
    <property type="match status" value="1"/>
</dbReference>
<dbReference type="HAMAP" id="MF_01082">
    <property type="entry name" value="TruD"/>
    <property type="match status" value="1"/>
</dbReference>
<dbReference type="InterPro" id="IPR020103">
    <property type="entry name" value="PsdUridine_synth_cat_dom_sf"/>
</dbReference>
<dbReference type="InterPro" id="IPR001656">
    <property type="entry name" value="PsdUridine_synth_TruD"/>
</dbReference>
<dbReference type="InterPro" id="IPR020119">
    <property type="entry name" value="PsdUridine_synth_TruD_CS"/>
</dbReference>
<dbReference type="InterPro" id="IPR011760">
    <property type="entry name" value="PsdUridine_synth_TruD_insert"/>
</dbReference>
<dbReference type="InterPro" id="IPR042214">
    <property type="entry name" value="TruD_catalytic"/>
</dbReference>
<dbReference type="InterPro" id="IPR043165">
    <property type="entry name" value="TruD_insert_sf"/>
</dbReference>
<dbReference type="InterPro" id="IPR050170">
    <property type="entry name" value="TruD_pseudoU_synthase"/>
</dbReference>
<dbReference type="NCBIfam" id="NF002155">
    <property type="entry name" value="PRK00984.1-4"/>
    <property type="match status" value="1"/>
</dbReference>
<dbReference type="NCBIfam" id="TIGR00094">
    <property type="entry name" value="tRNA_TruD_broad"/>
    <property type="match status" value="1"/>
</dbReference>
<dbReference type="PANTHER" id="PTHR47811">
    <property type="entry name" value="TRNA PSEUDOURIDINE SYNTHASE D"/>
    <property type="match status" value="1"/>
</dbReference>
<dbReference type="PANTHER" id="PTHR47811:SF1">
    <property type="entry name" value="TRNA PSEUDOURIDINE SYNTHASE D"/>
    <property type="match status" value="1"/>
</dbReference>
<dbReference type="Pfam" id="PF01142">
    <property type="entry name" value="TruD"/>
    <property type="match status" value="2"/>
</dbReference>
<dbReference type="SUPFAM" id="SSF55120">
    <property type="entry name" value="Pseudouridine synthase"/>
    <property type="match status" value="1"/>
</dbReference>
<dbReference type="PROSITE" id="PS50984">
    <property type="entry name" value="TRUD"/>
    <property type="match status" value="1"/>
</dbReference>
<dbReference type="PROSITE" id="PS01268">
    <property type="entry name" value="UPF0024"/>
    <property type="match status" value="1"/>
</dbReference>
<organism>
    <name type="scientific">Salmonella schwarzengrund (strain CVM19633)</name>
    <dbReference type="NCBI Taxonomy" id="439843"/>
    <lineage>
        <taxon>Bacteria</taxon>
        <taxon>Pseudomonadati</taxon>
        <taxon>Pseudomonadota</taxon>
        <taxon>Gammaproteobacteria</taxon>
        <taxon>Enterobacterales</taxon>
        <taxon>Enterobacteriaceae</taxon>
        <taxon>Salmonella</taxon>
    </lineage>
</organism>
<accession>B4TTV9</accession>
<feature type="chain" id="PRO_1000136854" description="tRNA pseudouridine synthase D">
    <location>
        <begin position="1"/>
        <end position="349"/>
    </location>
</feature>
<feature type="domain" description="TRUD" evidence="1">
    <location>
        <begin position="155"/>
        <end position="303"/>
    </location>
</feature>
<feature type="active site" description="Nucleophile" evidence="1">
    <location>
        <position position="80"/>
    </location>
</feature>
<feature type="binding site" evidence="1">
    <location>
        <position position="27"/>
    </location>
    <ligand>
        <name>substrate</name>
    </ligand>
</feature>
<feature type="binding site" evidence="1">
    <location>
        <position position="129"/>
    </location>
    <ligand>
        <name>substrate</name>
    </ligand>
</feature>
<feature type="binding site" evidence="1">
    <location>
        <position position="329"/>
    </location>
    <ligand>
        <name>substrate</name>
    </ligand>
</feature>
<gene>
    <name evidence="1" type="primary">truD</name>
    <name type="ordered locus">SeSA_A3079</name>
</gene>
<comment type="function">
    <text evidence="1">Responsible for synthesis of pseudouridine from uracil-13 in transfer RNAs.</text>
</comment>
<comment type="catalytic activity">
    <reaction evidence="1">
        <text>uridine(13) in tRNA = pseudouridine(13) in tRNA</text>
        <dbReference type="Rhea" id="RHEA:42540"/>
        <dbReference type="Rhea" id="RHEA-COMP:10105"/>
        <dbReference type="Rhea" id="RHEA-COMP:10106"/>
        <dbReference type="ChEBI" id="CHEBI:65314"/>
        <dbReference type="ChEBI" id="CHEBI:65315"/>
        <dbReference type="EC" id="5.4.99.27"/>
    </reaction>
</comment>
<comment type="similarity">
    <text evidence="1">Belongs to the pseudouridine synthase TruD family.</text>
</comment>
<protein>
    <recommendedName>
        <fullName evidence="1">tRNA pseudouridine synthase D</fullName>
        <ecNumber evidence="1">5.4.99.27</ecNumber>
    </recommendedName>
    <alternativeName>
        <fullName evidence="1">tRNA pseudouridine(13) synthase</fullName>
    </alternativeName>
    <alternativeName>
        <fullName evidence="1">tRNA pseudouridylate synthase D</fullName>
    </alternativeName>
    <alternativeName>
        <fullName evidence="1">tRNA-uridine isomerase D</fullName>
    </alternativeName>
</protein>
<reference key="1">
    <citation type="journal article" date="2011" name="J. Bacteriol.">
        <title>Comparative genomics of 28 Salmonella enterica isolates: evidence for CRISPR-mediated adaptive sublineage evolution.</title>
        <authorList>
            <person name="Fricke W.F."/>
            <person name="Mammel M.K."/>
            <person name="McDermott P.F."/>
            <person name="Tartera C."/>
            <person name="White D.G."/>
            <person name="Leclerc J.E."/>
            <person name="Ravel J."/>
            <person name="Cebula T.A."/>
        </authorList>
    </citation>
    <scope>NUCLEOTIDE SEQUENCE [LARGE SCALE GENOMIC DNA]</scope>
    <source>
        <strain>CVM19633</strain>
    </source>
</reference>
<name>TRUD_SALSV</name>
<proteinExistence type="inferred from homology"/>
<keyword id="KW-0413">Isomerase</keyword>
<keyword id="KW-0819">tRNA processing</keyword>